<accession>Q6GG73</accession>
<gene>
    <name evidence="1" type="primary">aspS</name>
    <name type="ordered locus">SAR1710</name>
</gene>
<dbReference type="EC" id="6.1.1.12" evidence="1"/>
<dbReference type="EMBL" id="BX571856">
    <property type="protein sequence ID" value="CAG40701.1"/>
    <property type="molecule type" value="Genomic_DNA"/>
</dbReference>
<dbReference type="RefSeq" id="WP_000044796.1">
    <property type="nucleotide sequence ID" value="NC_002952.2"/>
</dbReference>
<dbReference type="SMR" id="Q6GG73"/>
<dbReference type="KEGG" id="sar:SAR1710"/>
<dbReference type="HOGENOM" id="CLU_014330_3_2_9"/>
<dbReference type="Proteomes" id="UP000000596">
    <property type="component" value="Chromosome"/>
</dbReference>
<dbReference type="GO" id="GO:0005737">
    <property type="term" value="C:cytoplasm"/>
    <property type="evidence" value="ECO:0007669"/>
    <property type="project" value="UniProtKB-SubCell"/>
</dbReference>
<dbReference type="GO" id="GO:0004815">
    <property type="term" value="F:aspartate-tRNA ligase activity"/>
    <property type="evidence" value="ECO:0007669"/>
    <property type="project" value="UniProtKB-UniRule"/>
</dbReference>
<dbReference type="GO" id="GO:0005524">
    <property type="term" value="F:ATP binding"/>
    <property type="evidence" value="ECO:0007669"/>
    <property type="project" value="UniProtKB-UniRule"/>
</dbReference>
<dbReference type="GO" id="GO:0140096">
    <property type="term" value="F:catalytic activity, acting on a protein"/>
    <property type="evidence" value="ECO:0007669"/>
    <property type="project" value="UniProtKB-ARBA"/>
</dbReference>
<dbReference type="GO" id="GO:0003676">
    <property type="term" value="F:nucleic acid binding"/>
    <property type="evidence" value="ECO:0007669"/>
    <property type="project" value="InterPro"/>
</dbReference>
<dbReference type="GO" id="GO:0016740">
    <property type="term" value="F:transferase activity"/>
    <property type="evidence" value="ECO:0007669"/>
    <property type="project" value="UniProtKB-ARBA"/>
</dbReference>
<dbReference type="GO" id="GO:0006422">
    <property type="term" value="P:aspartyl-tRNA aminoacylation"/>
    <property type="evidence" value="ECO:0007669"/>
    <property type="project" value="UniProtKB-UniRule"/>
</dbReference>
<dbReference type="CDD" id="cd00777">
    <property type="entry name" value="AspRS_core"/>
    <property type="match status" value="1"/>
</dbReference>
<dbReference type="CDD" id="cd04317">
    <property type="entry name" value="EcAspRS_like_N"/>
    <property type="match status" value="1"/>
</dbReference>
<dbReference type="Gene3D" id="3.30.930.10">
    <property type="entry name" value="Bira Bifunctional Protein, Domain 2"/>
    <property type="match status" value="1"/>
</dbReference>
<dbReference type="Gene3D" id="3.30.1360.30">
    <property type="entry name" value="GAD-like domain"/>
    <property type="match status" value="1"/>
</dbReference>
<dbReference type="Gene3D" id="2.40.50.140">
    <property type="entry name" value="Nucleic acid-binding proteins"/>
    <property type="match status" value="1"/>
</dbReference>
<dbReference type="HAMAP" id="MF_00044">
    <property type="entry name" value="Asp_tRNA_synth_type1"/>
    <property type="match status" value="1"/>
</dbReference>
<dbReference type="InterPro" id="IPR004364">
    <property type="entry name" value="Aa-tRNA-synt_II"/>
</dbReference>
<dbReference type="InterPro" id="IPR006195">
    <property type="entry name" value="aa-tRNA-synth_II"/>
</dbReference>
<dbReference type="InterPro" id="IPR045864">
    <property type="entry name" value="aa-tRNA-synth_II/BPL/LPL"/>
</dbReference>
<dbReference type="InterPro" id="IPR004524">
    <property type="entry name" value="Asp-tRNA-ligase_1"/>
</dbReference>
<dbReference type="InterPro" id="IPR047089">
    <property type="entry name" value="Asp-tRNA-ligase_1_N"/>
</dbReference>
<dbReference type="InterPro" id="IPR002312">
    <property type="entry name" value="Asp/Asn-tRNA-synth_IIb"/>
</dbReference>
<dbReference type="InterPro" id="IPR047090">
    <property type="entry name" value="AspRS_core"/>
</dbReference>
<dbReference type="InterPro" id="IPR004115">
    <property type="entry name" value="GAD-like_sf"/>
</dbReference>
<dbReference type="InterPro" id="IPR029351">
    <property type="entry name" value="GAD_dom"/>
</dbReference>
<dbReference type="InterPro" id="IPR012340">
    <property type="entry name" value="NA-bd_OB-fold"/>
</dbReference>
<dbReference type="InterPro" id="IPR004365">
    <property type="entry name" value="NA-bd_OB_tRNA"/>
</dbReference>
<dbReference type="NCBIfam" id="TIGR00459">
    <property type="entry name" value="aspS_bact"/>
    <property type="match status" value="1"/>
</dbReference>
<dbReference type="NCBIfam" id="NF001750">
    <property type="entry name" value="PRK00476.1"/>
    <property type="match status" value="1"/>
</dbReference>
<dbReference type="PANTHER" id="PTHR22594:SF5">
    <property type="entry name" value="ASPARTATE--TRNA LIGASE, MITOCHONDRIAL"/>
    <property type="match status" value="1"/>
</dbReference>
<dbReference type="PANTHER" id="PTHR22594">
    <property type="entry name" value="ASPARTYL/LYSYL-TRNA SYNTHETASE"/>
    <property type="match status" value="1"/>
</dbReference>
<dbReference type="Pfam" id="PF02938">
    <property type="entry name" value="GAD"/>
    <property type="match status" value="1"/>
</dbReference>
<dbReference type="Pfam" id="PF00152">
    <property type="entry name" value="tRNA-synt_2"/>
    <property type="match status" value="1"/>
</dbReference>
<dbReference type="Pfam" id="PF01336">
    <property type="entry name" value="tRNA_anti-codon"/>
    <property type="match status" value="1"/>
</dbReference>
<dbReference type="PRINTS" id="PR01042">
    <property type="entry name" value="TRNASYNTHASP"/>
</dbReference>
<dbReference type="SUPFAM" id="SSF55681">
    <property type="entry name" value="Class II aaRS and biotin synthetases"/>
    <property type="match status" value="1"/>
</dbReference>
<dbReference type="SUPFAM" id="SSF55261">
    <property type="entry name" value="GAD domain-like"/>
    <property type="match status" value="1"/>
</dbReference>
<dbReference type="SUPFAM" id="SSF50249">
    <property type="entry name" value="Nucleic acid-binding proteins"/>
    <property type="match status" value="1"/>
</dbReference>
<dbReference type="PROSITE" id="PS50862">
    <property type="entry name" value="AA_TRNA_LIGASE_II"/>
    <property type="match status" value="1"/>
</dbReference>
<name>SYD_STAAR</name>
<organism>
    <name type="scientific">Staphylococcus aureus (strain MRSA252)</name>
    <dbReference type="NCBI Taxonomy" id="282458"/>
    <lineage>
        <taxon>Bacteria</taxon>
        <taxon>Bacillati</taxon>
        <taxon>Bacillota</taxon>
        <taxon>Bacilli</taxon>
        <taxon>Bacillales</taxon>
        <taxon>Staphylococcaceae</taxon>
        <taxon>Staphylococcus</taxon>
    </lineage>
</organism>
<comment type="function">
    <text evidence="1">Catalyzes the attachment of L-aspartate to tRNA(Asp) in a two-step reaction: L-aspartate is first activated by ATP to form Asp-AMP and then transferred to the acceptor end of tRNA(Asp).</text>
</comment>
<comment type="catalytic activity">
    <reaction evidence="1">
        <text>tRNA(Asp) + L-aspartate + ATP = L-aspartyl-tRNA(Asp) + AMP + diphosphate</text>
        <dbReference type="Rhea" id="RHEA:19649"/>
        <dbReference type="Rhea" id="RHEA-COMP:9660"/>
        <dbReference type="Rhea" id="RHEA-COMP:9678"/>
        <dbReference type="ChEBI" id="CHEBI:29991"/>
        <dbReference type="ChEBI" id="CHEBI:30616"/>
        <dbReference type="ChEBI" id="CHEBI:33019"/>
        <dbReference type="ChEBI" id="CHEBI:78442"/>
        <dbReference type="ChEBI" id="CHEBI:78516"/>
        <dbReference type="ChEBI" id="CHEBI:456215"/>
        <dbReference type="EC" id="6.1.1.12"/>
    </reaction>
</comment>
<comment type="subunit">
    <text evidence="1">Homodimer.</text>
</comment>
<comment type="subcellular location">
    <subcellularLocation>
        <location evidence="1">Cytoplasm</location>
    </subcellularLocation>
</comment>
<comment type="similarity">
    <text evidence="1">Belongs to the class-II aminoacyl-tRNA synthetase family. Type 1 subfamily.</text>
</comment>
<evidence type="ECO:0000255" key="1">
    <source>
        <dbReference type="HAMAP-Rule" id="MF_00044"/>
    </source>
</evidence>
<feature type="chain" id="PRO_0000110944" description="Aspartate--tRNA ligase">
    <location>
        <begin position="1"/>
        <end position="588"/>
    </location>
</feature>
<feature type="region of interest" description="Aspartate" evidence="1">
    <location>
        <begin position="201"/>
        <end position="204"/>
    </location>
</feature>
<feature type="binding site" evidence="1">
    <location>
        <position position="177"/>
    </location>
    <ligand>
        <name>L-aspartate</name>
        <dbReference type="ChEBI" id="CHEBI:29991"/>
    </ligand>
</feature>
<feature type="binding site" evidence="1">
    <location>
        <begin position="223"/>
        <end position="225"/>
    </location>
    <ligand>
        <name>ATP</name>
        <dbReference type="ChEBI" id="CHEBI:30616"/>
    </ligand>
</feature>
<feature type="binding site" evidence="1">
    <location>
        <position position="223"/>
    </location>
    <ligand>
        <name>L-aspartate</name>
        <dbReference type="ChEBI" id="CHEBI:29991"/>
    </ligand>
</feature>
<feature type="binding site" evidence="1">
    <location>
        <position position="232"/>
    </location>
    <ligand>
        <name>ATP</name>
        <dbReference type="ChEBI" id="CHEBI:30616"/>
    </ligand>
</feature>
<feature type="binding site" evidence="1">
    <location>
        <position position="451"/>
    </location>
    <ligand>
        <name>L-aspartate</name>
        <dbReference type="ChEBI" id="CHEBI:29991"/>
    </ligand>
</feature>
<feature type="binding site" evidence="1">
    <location>
        <position position="485"/>
    </location>
    <ligand>
        <name>ATP</name>
        <dbReference type="ChEBI" id="CHEBI:30616"/>
    </ligand>
</feature>
<feature type="binding site" evidence="1">
    <location>
        <position position="492"/>
    </location>
    <ligand>
        <name>L-aspartate</name>
        <dbReference type="ChEBI" id="CHEBI:29991"/>
    </ligand>
</feature>
<feature type="binding site" evidence="1">
    <location>
        <begin position="537"/>
        <end position="540"/>
    </location>
    <ligand>
        <name>ATP</name>
        <dbReference type="ChEBI" id="CHEBI:30616"/>
    </ligand>
</feature>
<keyword id="KW-0030">Aminoacyl-tRNA synthetase</keyword>
<keyword id="KW-0067">ATP-binding</keyword>
<keyword id="KW-0963">Cytoplasm</keyword>
<keyword id="KW-0436">Ligase</keyword>
<keyword id="KW-0547">Nucleotide-binding</keyword>
<keyword id="KW-0648">Protein biosynthesis</keyword>
<reference key="1">
    <citation type="journal article" date="2004" name="Proc. Natl. Acad. Sci. U.S.A.">
        <title>Complete genomes of two clinical Staphylococcus aureus strains: evidence for the rapid evolution of virulence and drug resistance.</title>
        <authorList>
            <person name="Holden M.T.G."/>
            <person name="Feil E.J."/>
            <person name="Lindsay J.A."/>
            <person name="Peacock S.J."/>
            <person name="Day N.P.J."/>
            <person name="Enright M.C."/>
            <person name="Foster T.J."/>
            <person name="Moore C.E."/>
            <person name="Hurst L."/>
            <person name="Atkin R."/>
            <person name="Barron A."/>
            <person name="Bason N."/>
            <person name="Bentley S.D."/>
            <person name="Chillingworth C."/>
            <person name="Chillingworth T."/>
            <person name="Churcher C."/>
            <person name="Clark L."/>
            <person name="Corton C."/>
            <person name="Cronin A."/>
            <person name="Doggett J."/>
            <person name="Dowd L."/>
            <person name="Feltwell T."/>
            <person name="Hance Z."/>
            <person name="Harris B."/>
            <person name="Hauser H."/>
            <person name="Holroyd S."/>
            <person name="Jagels K."/>
            <person name="James K.D."/>
            <person name="Lennard N."/>
            <person name="Line A."/>
            <person name="Mayes R."/>
            <person name="Moule S."/>
            <person name="Mungall K."/>
            <person name="Ormond D."/>
            <person name="Quail M.A."/>
            <person name="Rabbinowitsch E."/>
            <person name="Rutherford K.M."/>
            <person name="Sanders M."/>
            <person name="Sharp S."/>
            <person name="Simmonds M."/>
            <person name="Stevens K."/>
            <person name="Whitehead S."/>
            <person name="Barrell B.G."/>
            <person name="Spratt B.G."/>
            <person name="Parkhill J."/>
        </authorList>
    </citation>
    <scope>NUCLEOTIDE SEQUENCE [LARGE SCALE GENOMIC DNA]</scope>
    <source>
        <strain>MRSA252</strain>
    </source>
</reference>
<proteinExistence type="inferred from homology"/>
<protein>
    <recommendedName>
        <fullName evidence="1">Aspartate--tRNA ligase</fullName>
        <ecNumber evidence="1">6.1.1.12</ecNumber>
    </recommendedName>
    <alternativeName>
        <fullName evidence="1">Aspartyl-tRNA synthetase</fullName>
        <shortName evidence="1">AspRS</shortName>
    </alternativeName>
</protein>
<sequence>MSKRTTYCGLVTEAFLGQEITLKGWVNNRRDLGGLIFVDLRDREGIVQVVFNPAFSEEALKIAETVRSEYVVEVQGTVTKRDPETVNPKIKTGQVEVQVTNIKVINKSETPPFSINEENVNVDENIRLKYRYLDLRRQELAQTFKMRHQITRSIRQYLDDEGFFDIETPVLTKSTPEGARDYLVPSRVHDGEFYALPQSPQLFKQLLMISGFDKYYQIVKCFRDEDLRADRQPEFTQVDIEMSFVDQEDVMQMGEEMLKKVVKEVKGVEINGAFPRMTYKEAMRRYGSDKPDTRFEMELIDVSQLGRDMDFKVFKDTVENDGEIKAIVAKGAAEQYTRKDMDALTEFVNIYGAKGLAWVKVVEDGLTGPIGRFFEAENVETLLTLTGAEAGDLVMFVADKPNVVAQSLGALRVKLAKELGLIDETKLNFLWVTDWPLLEYDEDAKRYVAAHHPFTSPKEADIAKLGTAPEEAEANAYDIVLNGYELGGGSIRIHDGELQEKMFEVLGFTKEQAQEQFGFLLDAFKYGAPPHGGIALGLDRLVMLLTNRTNLRDTIAFPKTASATCLLTNAPGEVSDKQLEELSLRIRH</sequence>